<accession>B1VSK3</accession>
<reference key="1">
    <citation type="journal article" date="2008" name="J. Bacteriol.">
        <title>Genome sequence of the streptomycin-producing microorganism Streptomyces griseus IFO 13350.</title>
        <authorList>
            <person name="Ohnishi Y."/>
            <person name="Ishikawa J."/>
            <person name="Hara H."/>
            <person name="Suzuki H."/>
            <person name="Ikenoya M."/>
            <person name="Ikeda H."/>
            <person name="Yamashita A."/>
            <person name="Hattori M."/>
            <person name="Horinouchi S."/>
        </authorList>
    </citation>
    <scope>NUCLEOTIDE SEQUENCE [LARGE SCALE GENOMIC DNA]</scope>
    <source>
        <strain>JCM 4626 / CBS 651.72 / NBRC 13350 / KCC S-0626 / ISP 5235</strain>
    </source>
</reference>
<feature type="chain" id="PRO_1000145864" description="DNA integrity scanning protein DisA">
    <location>
        <begin position="1"/>
        <end position="374"/>
    </location>
</feature>
<feature type="domain" description="DAC" evidence="2">
    <location>
        <begin position="20"/>
        <end position="158"/>
    </location>
</feature>
<feature type="binding site" evidence="1">
    <location>
        <position position="87"/>
    </location>
    <ligand>
        <name>ATP</name>
        <dbReference type="ChEBI" id="CHEBI:30616"/>
    </ligand>
</feature>
<feature type="binding site" evidence="1">
    <location>
        <position position="105"/>
    </location>
    <ligand>
        <name>ATP</name>
        <dbReference type="ChEBI" id="CHEBI:30616"/>
    </ligand>
</feature>
<feature type="binding site" evidence="1">
    <location>
        <begin position="118"/>
        <end position="122"/>
    </location>
    <ligand>
        <name>ATP</name>
        <dbReference type="ChEBI" id="CHEBI:30616"/>
    </ligand>
</feature>
<organism>
    <name type="scientific">Streptomyces griseus subsp. griseus (strain JCM 4626 / CBS 651.72 / NBRC 13350 / KCC S-0626 / ISP 5235)</name>
    <dbReference type="NCBI Taxonomy" id="455632"/>
    <lineage>
        <taxon>Bacteria</taxon>
        <taxon>Bacillati</taxon>
        <taxon>Actinomycetota</taxon>
        <taxon>Actinomycetes</taxon>
        <taxon>Kitasatosporales</taxon>
        <taxon>Streptomycetaceae</taxon>
        <taxon>Streptomyces</taxon>
    </lineage>
</organism>
<protein>
    <recommendedName>
        <fullName evidence="1">DNA integrity scanning protein DisA</fullName>
    </recommendedName>
    <alternativeName>
        <fullName evidence="1">Cyclic di-AMP synthase</fullName>
        <shortName evidence="1">c-di-AMP synthase</shortName>
    </alternativeName>
    <alternativeName>
        <fullName evidence="1">Diadenylate cyclase</fullName>
        <ecNumber evidence="1">2.7.7.85</ecNumber>
    </alternativeName>
</protein>
<dbReference type="EC" id="2.7.7.85" evidence="1"/>
<dbReference type="EMBL" id="AP009493">
    <property type="protein sequence ID" value="BAG20957.1"/>
    <property type="molecule type" value="Genomic_DNA"/>
</dbReference>
<dbReference type="RefSeq" id="WP_003968311.1">
    <property type="nucleotide sequence ID" value="NC_010572.1"/>
</dbReference>
<dbReference type="SMR" id="B1VSK3"/>
<dbReference type="GeneID" id="91314306"/>
<dbReference type="KEGG" id="sgr:SGR_4128"/>
<dbReference type="eggNOG" id="COG1623">
    <property type="taxonomic scope" value="Bacteria"/>
</dbReference>
<dbReference type="HOGENOM" id="CLU_787128_0_0_11"/>
<dbReference type="Proteomes" id="UP000001685">
    <property type="component" value="Chromosome"/>
</dbReference>
<dbReference type="GO" id="GO:0004016">
    <property type="term" value="F:adenylate cyclase activity"/>
    <property type="evidence" value="ECO:0007669"/>
    <property type="project" value="TreeGrafter"/>
</dbReference>
<dbReference type="GO" id="GO:0005524">
    <property type="term" value="F:ATP binding"/>
    <property type="evidence" value="ECO:0007669"/>
    <property type="project" value="UniProtKB-UniRule"/>
</dbReference>
<dbReference type="GO" id="GO:0106408">
    <property type="term" value="F:diadenylate cyclase activity"/>
    <property type="evidence" value="ECO:0007669"/>
    <property type="project" value="UniProtKB-EC"/>
</dbReference>
<dbReference type="GO" id="GO:0003677">
    <property type="term" value="F:DNA binding"/>
    <property type="evidence" value="ECO:0007669"/>
    <property type="project" value="UniProtKB-UniRule"/>
</dbReference>
<dbReference type="GO" id="GO:0006281">
    <property type="term" value="P:DNA repair"/>
    <property type="evidence" value="ECO:0007669"/>
    <property type="project" value="UniProtKB-UniRule"/>
</dbReference>
<dbReference type="FunFam" id="1.10.150.20:FF:000016">
    <property type="entry name" value="DNA integrity scanning protein DisA"/>
    <property type="match status" value="1"/>
</dbReference>
<dbReference type="FunFam" id="1.20.1260.110:FF:000002">
    <property type="entry name" value="DNA integrity scanning protein DisA"/>
    <property type="match status" value="1"/>
</dbReference>
<dbReference type="FunFam" id="3.40.1700.10:FF:000001">
    <property type="entry name" value="DNA integrity scanning protein DisA"/>
    <property type="match status" value="1"/>
</dbReference>
<dbReference type="Gene3D" id="1.10.150.20">
    <property type="entry name" value="5' to 3' exonuclease, C-terminal subdomain"/>
    <property type="match status" value="1"/>
</dbReference>
<dbReference type="Gene3D" id="1.20.1260.110">
    <property type="entry name" value="DNA integrity scanning linker region"/>
    <property type="match status" value="1"/>
</dbReference>
<dbReference type="Gene3D" id="3.40.1700.10">
    <property type="entry name" value="DNA integrity scanning protein, DisA, N-terminal domain"/>
    <property type="match status" value="1"/>
</dbReference>
<dbReference type="HAMAP" id="MF_01438">
    <property type="entry name" value="DisA"/>
    <property type="match status" value="1"/>
</dbReference>
<dbReference type="InterPro" id="IPR050338">
    <property type="entry name" value="DisA"/>
</dbReference>
<dbReference type="InterPro" id="IPR038331">
    <property type="entry name" value="DisA_sf"/>
</dbReference>
<dbReference type="InterPro" id="IPR036888">
    <property type="entry name" value="DNA_integrity_DisA_N_sf"/>
</dbReference>
<dbReference type="InterPro" id="IPR018906">
    <property type="entry name" value="DNA_integrity_scan_DisA_link"/>
</dbReference>
<dbReference type="InterPro" id="IPR003390">
    <property type="entry name" value="DNA_integrity_scan_DisA_N"/>
</dbReference>
<dbReference type="InterPro" id="IPR023763">
    <property type="entry name" value="DNA_integrity_scanning_protein"/>
</dbReference>
<dbReference type="InterPro" id="IPR010994">
    <property type="entry name" value="RuvA_2-like"/>
</dbReference>
<dbReference type="NCBIfam" id="NF010009">
    <property type="entry name" value="PRK13482.1"/>
    <property type="match status" value="1"/>
</dbReference>
<dbReference type="PANTHER" id="PTHR34185">
    <property type="entry name" value="DIADENYLATE CYCLASE"/>
    <property type="match status" value="1"/>
</dbReference>
<dbReference type="PANTHER" id="PTHR34185:SF3">
    <property type="entry name" value="DNA INTEGRITY SCANNING PROTEIN DISA"/>
    <property type="match status" value="1"/>
</dbReference>
<dbReference type="Pfam" id="PF02457">
    <property type="entry name" value="DAC"/>
    <property type="match status" value="1"/>
</dbReference>
<dbReference type="Pfam" id="PF10635">
    <property type="entry name" value="DisA-linker"/>
    <property type="match status" value="1"/>
</dbReference>
<dbReference type="Pfam" id="PF14520">
    <property type="entry name" value="HHH_5"/>
    <property type="match status" value="1"/>
</dbReference>
<dbReference type="SUPFAM" id="SSF47781">
    <property type="entry name" value="RuvA domain 2-like"/>
    <property type="match status" value="1"/>
</dbReference>
<dbReference type="SUPFAM" id="SSF143597">
    <property type="entry name" value="YojJ-like"/>
    <property type="match status" value="1"/>
</dbReference>
<dbReference type="PROSITE" id="PS51794">
    <property type="entry name" value="DAC"/>
    <property type="match status" value="1"/>
</dbReference>
<evidence type="ECO:0000255" key="1">
    <source>
        <dbReference type="HAMAP-Rule" id="MF_01438"/>
    </source>
</evidence>
<evidence type="ECO:0000255" key="2">
    <source>
        <dbReference type="PROSITE-ProRule" id="PRU01130"/>
    </source>
</evidence>
<sequence>MAANDRATTPGKSGQGTGNEALMRASLSAVAPGMALRDGLERILRGNTGGLIVLGMDKTVESMCTGGFVLDVEFTATRLRELCKLDGALILDKDMTKILRAGVQLVPDASIHTEETGTRHRTADRVSKACGFPVVSVSQSMRLIALYVDGERRVLEESSAILSRANQALATLERYKLRLDEVAGTLSALEIEDLVTVRDVTAVAQRLEMVRRIATEIAEYVVELGTDGRLLSLQLDELIAGVEPERELVVRDYVPEPTAKRSRTVAEALTELDALSHTELLELPVVARALGYSGSPETLDSAVSPRGFRLLAKVPRLPGAIIERLVEHFGGLQKLLAASVDDLQTVDGVGEARARSVREGLSRLAESSILERYV</sequence>
<keyword id="KW-0067">ATP-binding</keyword>
<keyword id="KW-0227">DNA damage</keyword>
<keyword id="KW-0234">DNA repair</keyword>
<keyword id="KW-0238">DNA-binding</keyword>
<keyword id="KW-0460">Magnesium</keyword>
<keyword id="KW-0547">Nucleotide-binding</keyword>
<keyword id="KW-0548">Nucleotidyltransferase</keyword>
<keyword id="KW-0808">Transferase</keyword>
<name>DISA_STRGG</name>
<comment type="function">
    <text evidence="1">Participates in a DNA-damage check-point that is active prior to asymmetric division when DNA is damaged. DisA forms globular foci that rapidly scan along the chromosomes during sporulation, searching for lesions. When a lesion is present, DisA pauses at the lesion site. This triggers a cellular response that culminates in a temporary block in sporulation initiation.</text>
</comment>
<comment type="function">
    <text evidence="1">Also has diadenylate cyclase activity, catalyzing the condensation of 2 ATP molecules into cyclic di-AMP (c-di-AMP). c-di-AMP acts as a signaling molecule that couples DNA integrity with progression of sporulation. The rise in c-di-AMP level generated by DisA while scanning the chromosome, operates as a positive signal that advances sporulation; upon encountering a lesion, the DisA focus arrests at the damaged site and halts c-di-AMP synthesis.</text>
</comment>
<comment type="catalytic activity">
    <reaction evidence="1">
        <text>2 ATP = 3',3'-c-di-AMP + 2 diphosphate</text>
        <dbReference type="Rhea" id="RHEA:35655"/>
        <dbReference type="ChEBI" id="CHEBI:30616"/>
        <dbReference type="ChEBI" id="CHEBI:33019"/>
        <dbReference type="ChEBI" id="CHEBI:71500"/>
        <dbReference type="EC" id="2.7.7.85"/>
    </reaction>
</comment>
<comment type="cofactor">
    <cofactor evidence="1">
        <name>Mg(2+)</name>
        <dbReference type="ChEBI" id="CHEBI:18420"/>
    </cofactor>
</comment>
<comment type="subunit">
    <text evidence="1">Homooctamer.</text>
</comment>
<comment type="similarity">
    <text evidence="1">Belongs to the DisA family.</text>
</comment>
<gene>
    <name evidence="1" type="primary">disA</name>
    <name type="ordered locus">SGR_4128</name>
</gene>
<proteinExistence type="inferred from homology"/>